<organism>
    <name type="scientific">Mycobacterium bovis (strain ATCC BAA-935 / AF2122/97)</name>
    <dbReference type="NCBI Taxonomy" id="233413"/>
    <lineage>
        <taxon>Bacteria</taxon>
        <taxon>Bacillati</taxon>
        <taxon>Actinomycetota</taxon>
        <taxon>Actinomycetes</taxon>
        <taxon>Mycobacteriales</taxon>
        <taxon>Mycobacteriaceae</taxon>
        <taxon>Mycobacterium</taxon>
        <taxon>Mycobacterium tuberculosis complex</taxon>
    </lineage>
</organism>
<feature type="chain" id="PRO_0000195223" description="Glycerol-3-phosphate acyltransferase">
    <location>
        <begin position="1"/>
        <end position="789"/>
    </location>
</feature>
<feature type="short sequence motif" description="HXXXXD motif">
    <location>
        <begin position="276"/>
        <end position="281"/>
    </location>
</feature>
<reference key="1">
    <citation type="journal article" date="2003" name="Proc. Natl. Acad. Sci. U.S.A.">
        <title>The complete genome sequence of Mycobacterium bovis.</title>
        <authorList>
            <person name="Garnier T."/>
            <person name="Eiglmeier K."/>
            <person name="Camus J.-C."/>
            <person name="Medina N."/>
            <person name="Mansoor H."/>
            <person name="Pryor M."/>
            <person name="Duthoy S."/>
            <person name="Grondin S."/>
            <person name="Lacroix C."/>
            <person name="Monsempe C."/>
            <person name="Simon S."/>
            <person name="Harris B."/>
            <person name="Atkin R."/>
            <person name="Doggett J."/>
            <person name="Mayes R."/>
            <person name="Keating L."/>
            <person name="Wheeler P.R."/>
            <person name="Parkhill J."/>
            <person name="Barrell B.G."/>
            <person name="Cole S.T."/>
            <person name="Gordon S.V."/>
            <person name="Hewinson R.G."/>
        </authorList>
    </citation>
    <scope>NUCLEOTIDE SEQUENCE [LARGE SCALE GENOMIC DNA]</scope>
    <source>
        <strain>ATCC BAA-935 / AF2122/97</strain>
    </source>
</reference>
<reference key="2">
    <citation type="journal article" date="2017" name="Genome Announc.">
        <title>Updated reference genome sequence and annotation of Mycobacterium bovis AF2122/97.</title>
        <authorList>
            <person name="Malone K.M."/>
            <person name="Farrell D."/>
            <person name="Stuber T.P."/>
            <person name="Schubert O.T."/>
            <person name="Aebersold R."/>
            <person name="Robbe-Austerman S."/>
            <person name="Gordon S.V."/>
        </authorList>
    </citation>
    <scope>NUCLEOTIDE SEQUENCE [LARGE SCALE GENOMIC DNA]</scope>
    <scope>GENOME REANNOTATION</scope>
    <source>
        <strain>ATCC BAA-935 / AF2122/97</strain>
    </source>
</reference>
<name>PLSB_MYCBO</name>
<evidence type="ECO:0000255" key="1">
    <source>
        <dbReference type="HAMAP-Rule" id="MF_00393"/>
    </source>
</evidence>
<gene>
    <name evidence="1" type="primary">plsB</name>
    <name type="ordered locus">BQ2027_MB2507C</name>
</gene>
<keyword id="KW-0012">Acyltransferase</keyword>
<keyword id="KW-1003">Cell membrane</keyword>
<keyword id="KW-0444">Lipid biosynthesis</keyword>
<keyword id="KW-0443">Lipid metabolism</keyword>
<keyword id="KW-0472">Membrane</keyword>
<keyword id="KW-0594">Phospholipid biosynthesis</keyword>
<keyword id="KW-1208">Phospholipid metabolism</keyword>
<keyword id="KW-1185">Reference proteome</keyword>
<keyword id="KW-0808">Transferase</keyword>
<dbReference type="EC" id="2.3.1.15" evidence="1"/>
<dbReference type="EMBL" id="LT708304">
    <property type="protein sequence ID" value="SIU01123.1"/>
    <property type="molecule type" value="Genomic_DNA"/>
</dbReference>
<dbReference type="RefSeq" id="NP_856154.1">
    <property type="nucleotide sequence ID" value="NC_002945.3"/>
</dbReference>
<dbReference type="RefSeq" id="WP_010950725.1">
    <property type="nucleotide sequence ID" value="NC_002945.4"/>
</dbReference>
<dbReference type="SMR" id="Q7TYH5"/>
<dbReference type="KEGG" id="mbo:BQ2027_MB2507C"/>
<dbReference type="PATRIC" id="fig|233413.5.peg.2759"/>
<dbReference type="UniPathway" id="UPA00557">
    <property type="reaction ID" value="UER00612"/>
</dbReference>
<dbReference type="Proteomes" id="UP000001419">
    <property type="component" value="Chromosome"/>
</dbReference>
<dbReference type="GO" id="GO:0005886">
    <property type="term" value="C:plasma membrane"/>
    <property type="evidence" value="ECO:0007669"/>
    <property type="project" value="UniProtKB-SubCell"/>
</dbReference>
<dbReference type="GO" id="GO:0004366">
    <property type="term" value="F:glycerol-3-phosphate O-acyltransferase activity"/>
    <property type="evidence" value="ECO:0007669"/>
    <property type="project" value="UniProtKB-UniRule"/>
</dbReference>
<dbReference type="GO" id="GO:0016024">
    <property type="term" value="P:CDP-diacylglycerol biosynthetic process"/>
    <property type="evidence" value="ECO:0007669"/>
    <property type="project" value="UniProtKB-UniRule"/>
</dbReference>
<dbReference type="CDD" id="cd07993">
    <property type="entry name" value="LPLAT_DHAPAT-like"/>
    <property type="match status" value="1"/>
</dbReference>
<dbReference type="HAMAP" id="MF_00393">
    <property type="entry name" value="Glyc3P_acyltrans"/>
    <property type="match status" value="1"/>
</dbReference>
<dbReference type="InterPro" id="IPR022284">
    <property type="entry name" value="GPAT/DHAPAT"/>
</dbReference>
<dbReference type="InterPro" id="IPR045520">
    <property type="entry name" value="GPAT/DHAPAT_C"/>
</dbReference>
<dbReference type="InterPro" id="IPR041728">
    <property type="entry name" value="GPAT/DHAPAT_LPLAT"/>
</dbReference>
<dbReference type="InterPro" id="IPR028354">
    <property type="entry name" value="GPAT_PlsB"/>
</dbReference>
<dbReference type="InterPro" id="IPR002123">
    <property type="entry name" value="Plipid/glycerol_acylTrfase"/>
</dbReference>
<dbReference type="NCBIfam" id="NF002886">
    <property type="entry name" value="PRK03355.1"/>
    <property type="match status" value="1"/>
</dbReference>
<dbReference type="PANTHER" id="PTHR12563:SF17">
    <property type="entry name" value="DIHYDROXYACETONE PHOSPHATE ACYLTRANSFERASE"/>
    <property type="match status" value="1"/>
</dbReference>
<dbReference type="PANTHER" id="PTHR12563">
    <property type="entry name" value="GLYCEROL-3-PHOSPHATE ACYLTRANSFERASE"/>
    <property type="match status" value="1"/>
</dbReference>
<dbReference type="Pfam" id="PF01553">
    <property type="entry name" value="Acyltransferase"/>
    <property type="match status" value="1"/>
</dbReference>
<dbReference type="Pfam" id="PF19277">
    <property type="entry name" value="GPAT_C"/>
    <property type="match status" value="1"/>
</dbReference>
<dbReference type="PIRSF" id="PIRSF500064">
    <property type="entry name" value="GPAT"/>
    <property type="match status" value="1"/>
</dbReference>
<dbReference type="PIRSF" id="PIRSF000437">
    <property type="entry name" value="GPAT_DHAPAT"/>
    <property type="match status" value="1"/>
</dbReference>
<dbReference type="SMART" id="SM00563">
    <property type="entry name" value="PlsC"/>
    <property type="match status" value="1"/>
</dbReference>
<dbReference type="SUPFAM" id="SSF69593">
    <property type="entry name" value="Glycerol-3-phosphate (1)-acyltransferase"/>
    <property type="match status" value="1"/>
</dbReference>
<sequence length="789" mass="88341">MTKPAADASAVLTAEDTLVLASTATPVEMELIMGWLGQQRARHPDSKFDILKLPPRNAPPAALTALVEQLEPGFASSPQSGEDRSIVPVRVIWLPPADRSRAGKVAALLPGRDPYHPSQRQQRRILRTDPRRARVVAGESAKVSELRQQWRDTTVAEHKRDFAQFVSRRALLALARAEYRILGPQYKSPRLVKPEMLASARFRAGLDRIPGATVEDAGKMLDELSTGWSQVSVDLVSVLGRLASRGFDPEFDYDEYQVAAMRAALEAHPAVLLFSHRSYIDGVVVPVAMQDNRLPPVHMFGGINLSFGLMGPLMRRSGMIFIRRNIGNDPLYKYVLKEYVGYVVEKRFNLSWSIEGTRSRTGKMLPPKLGLMSYVADAYLDGRSDDILLQGVSICFDQLHEITEYAAYARGAEKTPEGLRWLYNFIKAQGERNFGKIYVRFPEAVSMRQYLGAPHGELTQDPAAKRLALQKMSFEVAWRILQATPVTATGLVSALLLTTRGTALTLDQLHHTLQDSLDYLERKQSPVSTSALRLRSREGVRAAADALSNGHPVTRVDSGREPVWYIAPDDEHAAAFYRSSVIHAFLETSIVELALAHAKHAEGDRVAAFWAQAMRLRDLLKFDFYFADSTAFRANIAQEMAWHQDWEDHLGVGGNEIDAMLYAKRPLMSDAMLRVFFEAYEIVADVLRDAPPDIGPEELTELALGLGRQFVAQGRVRSSEPVSTLLFATARQVAVDQELIAPAADLAERRVAFRRELRNILRDFDYVEQIARNQFVAREFKARQGRDRI</sequence>
<comment type="catalytic activity">
    <reaction evidence="1">
        <text>sn-glycerol 3-phosphate + an acyl-CoA = a 1-acyl-sn-glycero-3-phosphate + CoA</text>
        <dbReference type="Rhea" id="RHEA:15325"/>
        <dbReference type="ChEBI" id="CHEBI:57287"/>
        <dbReference type="ChEBI" id="CHEBI:57597"/>
        <dbReference type="ChEBI" id="CHEBI:57970"/>
        <dbReference type="ChEBI" id="CHEBI:58342"/>
        <dbReference type="EC" id="2.3.1.15"/>
    </reaction>
</comment>
<comment type="pathway">
    <text evidence="1">Phospholipid metabolism; CDP-diacylglycerol biosynthesis; CDP-diacylglycerol from sn-glycerol 3-phosphate: step 1/3.</text>
</comment>
<comment type="subcellular location">
    <subcellularLocation>
        <location evidence="1">Cell membrane</location>
        <topology evidence="1">Peripheral membrane protein</topology>
        <orientation evidence="1">Cytoplasmic side</orientation>
    </subcellularLocation>
</comment>
<comment type="domain">
    <text evidence="1">The HXXXXD motif is essential for acyltransferase activity and may constitute the binding site for the phosphate moiety of the glycerol-3-phosphate.</text>
</comment>
<comment type="similarity">
    <text evidence="1">Belongs to the GPAT/DAPAT family.</text>
</comment>
<accession>Q7TYH5</accession>
<accession>A0A1R3Y1A3</accession>
<accession>X2BKY7</accession>
<proteinExistence type="inferred from homology"/>
<protein>
    <recommendedName>
        <fullName evidence="1">Glycerol-3-phosphate acyltransferase</fullName>
        <shortName evidence="1">GPAT</shortName>
        <ecNumber evidence="1">2.3.1.15</ecNumber>
    </recommendedName>
</protein>